<protein>
    <recommendedName>
        <fullName evidence="1">ATP-dependent 6-phosphofructokinase</fullName>
        <shortName evidence="1">ATP-PFK</shortName>
        <shortName evidence="1">Phosphofructokinase</shortName>
        <ecNumber evidence="1">2.7.1.11</ecNumber>
    </recommendedName>
    <alternativeName>
        <fullName evidence="1">Phosphohexokinase</fullName>
    </alternativeName>
</protein>
<accession>Q8EPD6</accession>
<gene>
    <name evidence="1" type="primary">pfkA</name>
    <name type="synonym">pfk</name>
    <name type="ordered locus">OB2172</name>
</gene>
<organism>
    <name type="scientific">Oceanobacillus iheyensis (strain DSM 14371 / CIP 107618 / JCM 11309 / KCTC 3954 / HTE831)</name>
    <dbReference type="NCBI Taxonomy" id="221109"/>
    <lineage>
        <taxon>Bacteria</taxon>
        <taxon>Bacillati</taxon>
        <taxon>Bacillota</taxon>
        <taxon>Bacilli</taxon>
        <taxon>Bacillales</taxon>
        <taxon>Bacillaceae</taxon>
        <taxon>Oceanobacillus</taxon>
    </lineage>
</organism>
<proteinExistence type="inferred from homology"/>
<sequence>MKRIGVLTSGGDSPGMNAAIRAVVRKAIYHDLEVYGIKNGYQGLMDGNIEKMTLGSVGDIIHRGGTILFSARSEEFKTDEGQFRAIEQLNKHNIDGLVVIGGDGSFQGAKKLTEKGFPCIGVPGTIDNDIAGTDYTIGFDTSLNTIIDAVDKVRDTATSHERTYIIEVMGRDAGDLALWAGLAVGAESILIPEEKEDFSSIVQRLKNGHDRGKKHSIILLAEGVGSGFEFGKRIEEVAELETRVTVLGHIQRGGSPTGQDRVLASRLGARAIELLIDNQGGRMVGIQKNVLVDYTFDEVFNVEHTIDKGMYKLSKELSI</sequence>
<name>PFKA_OCEIH</name>
<dbReference type="EC" id="2.7.1.11" evidence="1"/>
<dbReference type="EMBL" id="BA000028">
    <property type="protein sequence ID" value="BAC14128.1"/>
    <property type="molecule type" value="Genomic_DNA"/>
</dbReference>
<dbReference type="RefSeq" id="WP_011066566.1">
    <property type="nucleotide sequence ID" value="NC_004193.1"/>
</dbReference>
<dbReference type="SMR" id="Q8EPD6"/>
<dbReference type="STRING" id="221109.gene:10734420"/>
<dbReference type="KEGG" id="oih:OB2172"/>
<dbReference type="eggNOG" id="COG0205">
    <property type="taxonomic scope" value="Bacteria"/>
</dbReference>
<dbReference type="HOGENOM" id="CLU_020655_0_1_9"/>
<dbReference type="OrthoDB" id="9802503at2"/>
<dbReference type="PhylomeDB" id="Q8EPD6"/>
<dbReference type="UniPathway" id="UPA00109">
    <property type="reaction ID" value="UER00182"/>
</dbReference>
<dbReference type="Proteomes" id="UP000000822">
    <property type="component" value="Chromosome"/>
</dbReference>
<dbReference type="GO" id="GO:0005945">
    <property type="term" value="C:6-phosphofructokinase complex"/>
    <property type="evidence" value="ECO:0007669"/>
    <property type="project" value="TreeGrafter"/>
</dbReference>
<dbReference type="GO" id="GO:0003872">
    <property type="term" value="F:6-phosphofructokinase activity"/>
    <property type="evidence" value="ECO:0007669"/>
    <property type="project" value="UniProtKB-UniRule"/>
</dbReference>
<dbReference type="GO" id="GO:0016208">
    <property type="term" value="F:AMP binding"/>
    <property type="evidence" value="ECO:0007669"/>
    <property type="project" value="TreeGrafter"/>
</dbReference>
<dbReference type="GO" id="GO:0005524">
    <property type="term" value="F:ATP binding"/>
    <property type="evidence" value="ECO:0007669"/>
    <property type="project" value="UniProtKB-KW"/>
</dbReference>
<dbReference type="GO" id="GO:0070095">
    <property type="term" value="F:fructose-6-phosphate binding"/>
    <property type="evidence" value="ECO:0007669"/>
    <property type="project" value="TreeGrafter"/>
</dbReference>
<dbReference type="GO" id="GO:0042802">
    <property type="term" value="F:identical protein binding"/>
    <property type="evidence" value="ECO:0007669"/>
    <property type="project" value="TreeGrafter"/>
</dbReference>
<dbReference type="GO" id="GO:0046872">
    <property type="term" value="F:metal ion binding"/>
    <property type="evidence" value="ECO:0007669"/>
    <property type="project" value="UniProtKB-KW"/>
</dbReference>
<dbReference type="GO" id="GO:0048029">
    <property type="term" value="F:monosaccharide binding"/>
    <property type="evidence" value="ECO:0007669"/>
    <property type="project" value="TreeGrafter"/>
</dbReference>
<dbReference type="GO" id="GO:0061621">
    <property type="term" value="P:canonical glycolysis"/>
    <property type="evidence" value="ECO:0007669"/>
    <property type="project" value="TreeGrafter"/>
</dbReference>
<dbReference type="GO" id="GO:0030388">
    <property type="term" value="P:fructose 1,6-bisphosphate metabolic process"/>
    <property type="evidence" value="ECO:0007669"/>
    <property type="project" value="TreeGrafter"/>
</dbReference>
<dbReference type="GO" id="GO:0006002">
    <property type="term" value="P:fructose 6-phosphate metabolic process"/>
    <property type="evidence" value="ECO:0007669"/>
    <property type="project" value="InterPro"/>
</dbReference>
<dbReference type="FunFam" id="3.40.50.450:FF:000001">
    <property type="entry name" value="ATP-dependent 6-phosphofructokinase"/>
    <property type="match status" value="1"/>
</dbReference>
<dbReference type="FunFam" id="3.40.50.460:FF:000002">
    <property type="entry name" value="ATP-dependent 6-phosphofructokinase"/>
    <property type="match status" value="1"/>
</dbReference>
<dbReference type="Gene3D" id="3.40.50.450">
    <property type="match status" value="1"/>
</dbReference>
<dbReference type="Gene3D" id="3.40.50.460">
    <property type="entry name" value="Phosphofructokinase domain"/>
    <property type="match status" value="1"/>
</dbReference>
<dbReference type="HAMAP" id="MF_00339">
    <property type="entry name" value="Phosphofructokinase_I_B1"/>
    <property type="match status" value="1"/>
</dbReference>
<dbReference type="InterPro" id="IPR022953">
    <property type="entry name" value="ATP_PFK"/>
</dbReference>
<dbReference type="InterPro" id="IPR012003">
    <property type="entry name" value="ATP_PFK_prok-type"/>
</dbReference>
<dbReference type="InterPro" id="IPR012828">
    <property type="entry name" value="PFKA_ATP_prok"/>
</dbReference>
<dbReference type="InterPro" id="IPR015912">
    <property type="entry name" value="Phosphofructokinase_CS"/>
</dbReference>
<dbReference type="InterPro" id="IPR000023">
    <property type="entry name" value="Phosphofructokinase_dom"/>
</dbReference>
<dbReference type="InterPro" id="IPR035966">
    <property type="entry name" value="PKF_sf"/>
</dbReference>
<dbReference type="NCBIfam" id="TIGR02482">
    <property type="entry name" value="PFKA_ATP"/>
    <property type="match status" value="1"/>
</dbReference>
<dbReference type="NCBIfam" id="NF002872">
    <property type="entry name" value="PRK03202.1"/>
    <property type="match status" value="1"/>
</dbReference>
<dbReference type="PANTHER" id="PTHR13697:SF4">
    <property type="entry name" value="ATP-DEPENDENT 6-PHOSPHOFRUCTOKINASE"/>
    <property type="match status" value="1"/>
</dbReference>
<dbReference type="PANTHER" id="PTHR13697">
    <property type="entry name" value="PHOSPHOFRUCTOKINASE"/>
    <property type="match status" value="1"/>
</dbReference>
<dbReference type="Pfam" id="PF00365">
    <property type="entry name" value="PFK"/>
    <property type="match status" value="1"/>
</dbReference>
<dbReference type="PIRSF" id="PIRSF000532">
    <property type="entry name" value="ATP_PFK_prok"/>
    <property type="match status" value="1"/>
</dbReference>
<dbReference type="PRINTS" id="PR00476">
    <property type="entry name" value="PHFRCTKINASE"/>
</dbReference>
<dbReference type="SUPFAM" id="SSF53784">
    <property type="entry name" value="Phosphofructokinase"/>
    <property type="match status" value="1"/>
</dbReference>
<dbReference type="PROSITE" id="PS00433">
    <property type="entry name" value="PHOSPHOFRUCTOKINASE"/>
    <property type="match status" value="1"/>
</dbReference>
<reference key="1">
    <citation type="journal article" date="2002" name="Nucleic Acids Res.">
        <title>Genome sequence of Oceanobacillus iheyensis isolated from the Iheya Ridge and its unexpected adaptive capabilities to extreme environments.</title>
        <authorList>
            <person name="Takami H."/>
            <person name="Takaki Y."/>
            <person name="Uchiyama I."/>
        </authorList>
    </citation>
    <scope>NUCLEOTIDE SEQUENCE [LARGE SCALE GENOMIC DNA]</scope>
    <source>
        <strain>DSM 14371 / CIP 107618 / JCM 11309 / KCTC 3954 / HTE831</strain>
    </source>
</reference>
<feature type="chain" id="PRO_0000111970" description="ATP-dependent 6-phosphofructokinase">
    <location>
        <begin position="1"/>
        <end position="319"/>
    </location>
</feature>
<feature type="active site" description="Proton acceptor" evidence="1">
    <location>
        <position position="127"/>
    </location>
</feature>
<feature type="binding site" evidence="1">
    <location>
        <position position="11"/>
    </location>
    <ligand>
        <name>ATP</name>
        <dbReference type="ChEBI" id="CHEBI:30616"/>
    </ligand>
</feature>
<feature type="binding site" evidence="1">
    <location>
        <begin position="21"/>
        <end position="25"/>
    </location>
    <ligand>
        <name>ADP</name>
        <dbReference type="ChEBI" id="CHEBI:456216"/>
        <note>allosteric activator; ligand shared between dimeric partners</note>
    </ligand>
</feature>
<feature type="binding site" evidence="1">
    <location>
        <begin position="72"/>
        <end position="73"/>
    </location>
    <ligand>
        <name>ATP</name>
        <dbReference type="ChEBI" id="CHEBI:30616"/>
    </ligand>
</feature>
<feature type="binding site" evidence="1">
    <location>
        <begin position="102"/>
        <end position="105"/>
    </location>
    <ligand>
        <name>ATP</name>
        <dbReference type="ChEBI" id="CHEBI:30616"/>
    </ligand>
</feature>
<feature type="binding site" evidence="1">
    <location>
        <position position="103"/>
    </location>
    <ligand>
        <name>Mg(2+)</name>
        <dbReference type="ChEBI" id="CHEBI:18420"/>
        <note>catalytic</note>
    </ligand>
</feature>
<feature type="binding site" description="in other chain" evidence="1">
    <location>
        <begin position="125"/>
        <end position="127"/>
    </location>
    <ligand>
        <name>substrate</name>
        <note>ligand shared between dimeric partners</note>
    </ligand>
</feature>
<feature type="binding site" description="in other chain" evidence="1">
    <location>
        <position position="154"/>
    </location>
    <ligand>
        <name>ADP</name>
        <dbReference type="ChEBI" id="CHEBI:456216"/>
        <note>allosteric activator; ligand shared between dimeric partners</note>
    </ligand>
</feature>
<feature type="binding site" evidence="1">
    <location>
        <position position="162"/>
    </location>
    <ligand>
        <name>substrate</name>
        <note>ligand shared between dimeric partners</note>
    </ligand>
</feature>
<feature type="binding site" description="in other chain" evidence="1">
    <location>
        <begin position="169"/>
        <end position="171"/>
    </location>
    <ligand>
        <name>substrate</name>
        <note>ligand shared between dimeric partners</note>
    </ligand>
</feature>
<feature type="binding site" description="in other chain" evidence="1">
    <location>
        <begin position="185"/>
        <end position="187"/>
    </location>
    <ligand>
        <name>ADP</name>
        <dbReference type="ChEBI" id="CHEBI:456216"/>
        <note>allosteric activator; ligand shared between dimeric partners</note>
    </ligand>
</feature>
<feature type="binding site" description="in other chain" evidence="1">
    <location>
        <position position="211"/>
    </location>
    <ligand>
        <name>ADP</name>
        <dbReference type="ChEBI" id="CHEBI:456216"/>
        <note>allosteric activator; ligand shared between dimeric partners</note>
    </ligand>
</feature>
<feature type="binding site" description="in other chain" evidence="1">
    <location>
        <begin position="213"/>
        <end position="215"/>
    </location>
    <ligand>
        <name>ADP</name>
        <dbReference type="ChEBI" id="CHEBI:456216"/>
        <note>allosteric activator; ligand shared between dimeric partners</note>
    </ligand>
</feature>
<feature type="binding site" description="in other chain" evidence="1">
    <location>
        <position position="222"/>
    </location>
    <ligand>
        <name>substrate</name>
        <note>ligand shared between dimeric partners</note>
    </ligand>
</feature>
<feature type="binding site" evidence="1">
    <location>
        <position position="243"/>
    </location>
    <ligand>
        <name>substrate</name>
        <note>ligand shared between dimeric partners</note>
    </ligand>
</feature>
<feature type="binding site" description="in other chain" evidence="1">
    <location>
        <begin position="249"/>
        <end position="252"/>
    </location>
    <ligand>
        <name>substrate</name>
        <note>ligand shared between dimeric partners</note>
    </ligand>
</feature>
<comment type="function">
    <text evidence="1">Catalyzes the phosphorylation of D-fructose 6-phosphate to fructose 1,6-bisphosphate by ATP, the first committing step of glycolysis.</text>
</comment>
<comment type="catalytic activity">
    <reaction evidence="1">
        <text>beta-D-fructose 6-phosphate + ATP = beta-D-fructose 1,6-bisphosphate + ADP + H(+)</text>
        <dbReference type="Rhea" id="RHEA:16109"/>
        <dbReference type="ChEBI" id="CHEBI:15378"/>
        <dbReference type="ChEBI" id="CHEBI:30616"/>
        <dbReference type="ChEBI" id="CHEBI:32966"/>
        <dbReference type="ChEBI" id="CHEBI:57634"/>
        <dbReference type="ChEBI" id="CHEBI:456216"/>
        <dbReference type="EC" id="2.7.1.11"/>
    </reaction>
</comment>
<comment type="cofactor">
    <cofactor evidence="1">
        <name>Mg(2+)</name>
        <dbReference type="ChEBI" id="CHEBI:18420"/>
    </cofactor>
</comment>
<comment type="activity regulation">
    <text evidence="1">Allosterically activated by ADP and other diphosphonucleosides, and allosterically inhibited by phosphoenolpyruvate.</text>
</comment>
<comment type="pathway">
    <text evidence="1">Carbohydrate degradation; glycolysis; D-glyceraldehyde 3-phosphate and glycerone phosphate from D-glucose: step 3/4.</text>
</comment>
<comment type="subunit">
    <text evidence="1">Homotetramer.</text>
</comment>
<comment type="subcellular location">
    <subcellularLocation>
        <location evidence="1">Cytoplasm</location>
    </subcellularLocation>
</comment>
<comment type="similarity">
    <text evidence="1">Belongs to the phosphofructokinase type A (PFKA) family. ATP-dependent PFK group I subfamily. Prokaryotic clade 'B1' sub-subfamily.</text>
</comment>
<keyword id="KW-0021">Allosteric enzyme</keyword>
<keyword id="KW-0067">ATP-binding</keyword>
<keyword id="KW-0963">Cytoplasm</keyword>
<keyword id="KW-0324">Glycolysis</keyword>
<keyword id="KW-0418">Kinase</keyword>
<keyword id="KW-0460">Magnesium</keyword>
<keyword id="KW-0479">Metal-binding</keyword>
<keyword id="KW-0547">Nucleotide-binding</keyword>
<keyword id="KW-1185">Reference proteome</keyword>
<keyword id="KW-0808">Transferase</keyword>
<evidence type="ECO:0000255" key="1">
    <source>
        <dbReference type="HAMAP-Rule" id="MF_00339"/>
    </source>
</evidence>